<accession>Q3KR97</accession>
<accession>Q5FWT2</accession>
<keyword id="KW-0009">Actin-binding</keyword>
<keyword id="KW-0025">Alternative splicing</keyword>
<keyword id="KW-0175">Coiled coil</keyword>
<keyword id="KW-0963">Cytoplasm</keyword>
<keyword id="KW-0206">Cytoskeleton</keyword>
<keyword id="KW-0597">Phosphoprotein</keyword>
<keyword id="KW-1185">Reference proteome</keyword>
<keyword id="KW-0728">SH3 domain</keyword>
<feature type="chain" id="PRO_0000247856" description="BAR/IMD domain-containing adapter protein 2-like 1">
    <location>
        <begin position="1"/>
        <end position="516"/>
    </location>
</feature>
<feature type="domain" description="IMD" evidence="5">
    <location>
        <begin position="1"/>
        <end position="249"/>
    </location>
</feature>
<feature type="domain" description="SH3" evidence="4">
    <location>
        <begin position="340"/>
        <end position="403"/>
    </location>
</feature>
<feature type="region of interest" description="Disordered" evidence="6">
    <location>
        <begin position="303"/>
        <end position="328"/>
    </location>
</feature>
<feature type="region of interest" description="Disordered" evidence="6">
    <location>
        <begin position="454"/>
        <end position="516"/>
    </location>
</feature>
<feature type="region of interest" description="Binds F-actin" evidence="1">
    <location>
        <begin position="488"/>
        <end position="516"/>
    </location>
</feature>
<feature type="coiled-coil region" evidence="3">
    <location>
        <begin position="115"/>
        <end position="148"/>
    </location>
</feature>
<feature type="compositionally biased region" description="Polar residues" evidence="6">
    <location>
        <begin position="474"/>
        <end position="485"/>
    </location>
</feature>
<feature type="modified residue" description="Phosphothreonine" evidence="2">
    <location>
        <position position="248"/>
    </location>
</feature>
<feature type="modified residue" description="Phosphothreonine" evidence="2">
    <location>
        <position position="257"/>
    </location>
</feature>
<feature type="modified residue" description="Phosphoserine" evidence="9">
    <location>
        <position position="261"/>
    </location>
</feature>
<feature type="modified residue" description="Phosphoserine" evidence="9">
    <location>
        <position position="281"/>
    </location>
</feature>
<feature type="modified residue" description="Phosphoserine" evidence="9">
    <location>
        <position position="332"/>
    </location>
</feature>
<feature type="modified residue" description="Phosphothreonine" evidence="2">
    <location>
        <position position="413"/>
    </location>
</feature>
<feature type="modified residue" description="Phosphoserine" evidence="2">
    <location>
        <position position="415"/>
    </location>
</feature>
<feature type="modified residue" description="Phosphoserine" evidence="2">
    <location>
        <position position="421"/>
    </location>
</feature>
<feature type="modified residue" description="Phosphoserine" evidence="9">
    <location>
        <position position="423"/>
    </location>
</feature>
<feature type="splice variant" id="VSP_020077" description="In isoform 2." evidence="7">
    <location>
        <begin position="1"/>
        <end position="43"/>
    </location>
</feature>
<comment type="function">
    <text evidence="1">May function as adapter protein. Involved in the formation of clusters of actin bundles. Plays a role in the reorganization of the actin cytoskeleton in response to bacterial infection (By similarity).</text>
</comment>
<comment type="subunit">
    <text evidence="1">Interacts with RAC1. Binds to F-actin. Interacts with FASLG (By similarity).</text>
</comment>
<comment type="subcellular location">
    <subcellularLocation>
        <location evidence="1">Cytoplasm</location>
        <location evidence="1">Cytoskeleton</location>
    </subcellularLocation>
    <text evidence="1">Recruited to actin pedestals that are formed upon infection by bacteria at bacterial attachment sites.</text>
</comment>
<comment type="alternative products">
    <event type="alternative splicing"/>
    <isoform>
        <id>Q3KR97-1</id>
        <name>1</name>
        <sequence type="displayed"/>
    </isoform>
    <isoform>
        <id>Q3KR97-2</id>
        <name>2</name>
        <sequence type="described" ref="VSP_020077"/>
    </isoform>
</comment>
<comment type="domain">
    <text evidence="1">The IMD domain is predicted to have a helical structure. It may induce actin bundling and filopodia formation (By similarity).</text>
</comment>
<comment type="PTM">
    <text evidence="1">Phosphorylated on tyrosine in response to insulin.</text>
</comment>
<comment type="sequence caution" evidence="8">
    <conflict type="erroneous initiation">
        <sequence resource="EMBL-CDS" id="AAH89216"/>
    </conflict>
</comment>
<sequence>MSRGPEEVNRLTENTYRNVVEQFNPGLRNLINLGKNYEKAVNAMILAGKAYYDGVAKIGEIATGSPVSTELGHVLIEISSTHKKLNETLDENFKKFHKEIIHELEKKTELDVKYMNATLKRYQAEHRNKLDSLEKSQAELKKIRRKSQGGRNALKYEHKEIEYVETVTSRQSEIQKFIADGCKEALLEEKRRFCFLVDKHCSFASHIHRYHLQSAELLNSKLPRWQETCCDATKVPEKIMNMIEEIKTPISTPVSGTPQPSPMTERSKMIGKDYDTLSKYSPKMPPAPSVKAYTSPLIDMFNNPATAGQSAEKTNNSTANTGDDPSLQRSVSVATGLNMMKKQKVKTIFPHTAGNNKTLLSFAQGDVLTLLIPEEKDGWLYGEHDTTKVRGWFPSSYTKLLEENMKEAMSVPTPSSAPVRSISTVDLTEKSSVVIPPPDYLECLSMGATSDKRADAAKIPSTSTFKAPVPRPDATSTSPSDSNGTAKPPFLSGENPFATVKLRPTVTNDRSAPIIR</sequence>
<proteinExistence type="evidence at protein level"/>
<protein>
    <recommendedName>
        <fullName evidence="2">BAR/IMD domain-containing adapter protein 2-like 1</fullName>
    </recommendedName>
    <alternativeName>
        <fullName>Brain-specific angiogenesis inhibitor 1-associated protein 2-like protein 1</fullName>
        <shortName>BAI1-associated protein 2-like protein 1</shortName>
    </alternativeName>
</protein>
<name>BI2L1_RAT</name>
<evidence type="ECO:0000250" key="1"/>
<evidence type="ECO:0000250" key="2">
    <source>
        <dbReference type="UniProtKB" id="Q9UHR4"/>
    </source>
</evidence>
<evidence type="ECO:0000255" key="3"/>
<evidence type="ECO:0000255" key="4">
    <source>
        <dbReference type="PROSITE-ProRule" id="PRU00192"/>
    </source>
</evidence>
<evidence type="ECO:0000255" key="5">
    <source>
        <dbReference type="PROSITE-ProRule" id="PRU00668"/>
    </source>
</evidence>
<evidence type="ECO:0000256" key="6">
    <source>
        <dbReference type="SAM" id="MobiDB-lite"/>
    </source>
</evidence>
<evidence type="ECO:0000303" key="7">
    <source>
    </source>
</evidence>
<evidence type="ECO:0000305" key="8"/>
<evidence type="ECO:0007744" key="9">
    <source>
    </source>
</evidence>
<reference key="1">
    <citation type="journal article" date="2004" name="Genome Res.">
        <title>The status, quality, and expansion of the NIH full-length cDNA project: the Mammalian Gene Collection (MGC).</title>
        <authorList>
            <consortium name="The MGC Project Team"/>
        </authorList>
    </citation>
    <scope>NUCLEOTIDE SEQUENCE [LARGE SCALE MRNA] (ISOFORMS 1 AND 2)</scope>
    <source>
        <tissue>Ovary</tissue>
        <tissue>Spleen</tissue>
    </source>
</reference>
<reference key="2">
    <citation type="journal article" date="2012" name="Nat. Commun.">
        <title>Quantitative maps of protein phosphorylation sites across 14 different rat organs and tissues.</title>
        <authorList>
            <person name="Lundby A."/>
            <person name="Secher A."/>
            <person name="Lage K."/>
            <person name="Nordsborg N.B."/>
            <person name="Dmytriyev A."/>
            <person name="Lundby C."/>
            <person name="Olsen J.V."/>
        </authorList>
    </citation>
    <scope>PHOSPHORYLATION [LARGE SCALE ANALYSIS] AT SER-261; SER-281; SER-332 AND SER-423</scope>
    <scope>IDENTIFICATION BY MASS SPECTROMETRY [LARGE SCALE ANALYSIS]</scope>
</reference>
<organism>
    <name type="scientific">Rattus norvegicus</name>
    <name type="common">Rat</name>
    <dbReference type="NCBI Taxonomy" id="10116"/>
    <lineage>
        <taxon>Eukaryota</taxon>
        <taxon>Metazoa</taxon>
        <taxon>Chordata</taxon>
        <taxon>Craniata</taxon>
        <taxon>Vertebrata</taxon>
        <taxon>Euteleostomi</taxon>
        <taxon>Mammalia</taxon>
        <taxon>Eutheria</taxon>
        <taxon>Euarchontoglires</taxon>
        <taxon>Glires</taxon>
        <taxon>Rodentia</taxon>
        <taxon>Myomorpha</taxon>
        <taxon>Muroidea</taxon>
        <taxon>Muridae</taxon>
        <taxon>Murinae</taxon>
        <taxon>Rattus</taxon>
    </lineage>
</organism>
<dbReference type="EMBL" id="BC089216">
    <property type="protein sequence ID" value="AAH89216.1"/>
    <property type="status" value="ALT_INIT"/>
    <property type="molecule type" value="mRNA"/>
</dbReference>
<dbReference type="EMBL" id="BC105815">
    <property type="protein sequence ID" value="AAI05816.1"/>
    <property type="molecule type" value="mRNA"/>
</dbReference>
<dbReference type="RefSeq" id="NP_001029312.1">
    <molecule id="Q3KR97-1"/>
    <property type="nucleotide sequence ID" value="NM_001034140.1"/>
</dbReference>
<dbReference type="SMR" id="Q3KR97"/>
<dbReference type="FunCoup" id="Q3KR97">
    <property type="interactions" value="487"/>
</dbReference>
<dbReference type="IntAct" id="Q3KR97">
    <property type="interactions" value="2"/>
</dbReference>
<dbReference type="STRING" id="10116.ENSRNOP00000057568"/>
<dbReference type="GlyGen" id="Q3KR97">
    <property type="glycosylation" value="1 site"/>
</dbReference>
<dbReference type="iPTMnet" id="Q3KR97"/>
<dbReference type="PhosphoSitePlus" id="Q3KR97"/>
<dbReference type="PaxDb" id="10116-ENSRNOP00000057568"/>
<dbReference type="GeneID" id="304282"/>
<dbReference type="KEGG" id="rno:304282"/>
<dbReference type="AGR" id="RGD:1308452"/>
<dbReference type="CTD" id="55971"/>
<dbReference type="RGD" id="1308452">
    <property type="gene designation" value="Baiap2l1"/>
</dbReference>
<dbReference type="VEuPathDB" id="HostDB:ENSRNOG00000001007"/>
<dbReference type="eggNOG" id="ENOG502QQC6">
    <property type="taxonomic scope" value="Eukaryota"/>
</dbReference>
<dbReference type="HOGENOM" id="CLU_025877_0_1_1"/>
<dbReference type="InParanoid" id="Q3KR97"/>
<dbReference type="OrthoDB" id="3800937at2759"/>
<dbReference type="PhylomeDB" id="Q3KR97"/>
<dbReference type="TreeFam" id="TF325648"/>
<dbReference type="Reactome" id="R-RNO-9013149">
    <property type="pathway name" value="RAC1 GTPase cycle"/>
</dbReference>
<dbReference type="Reactome" id="R-RNO-9013404">
    <property type="pathway name" value="RAC2 GTPase cycle"/>
</dbReference>
<dbReference type="Reactome" id="R-RNO-9035034">
    <property type="pathway name" value="RHOF GTPase cycle"/>
</dbReference>
<dbReference type="PRO" id="PR:Q3KR97"/>
<dbReference type="Proteomes" id="UP000002494">
    <property type="component" value="Chromosome 12"/>
</dbReference>
<dbReference type="Bgee" id="ENSRNOG00000001007">
    <property type="expression patterns" value="Expressed in jejunum and 19 other cell types or tissues"/>
</dbReference>
<dbReference type="GO" id="GO:0015629">
    <property type="term" value="C:actin cytoskeleton"/>
    <property type="evidence" value="ECO:0000266"/>
    <property type="project" value="RGD"/>
</dbReference>
<dbReference type="GO" id="GO:0005829">
    <property type="term" value="C:cytosol"/>
    <property type="evidence" value="ECO:0000250"/>
    <property type="project" value="UniProtKB"/>
</dbReference>
<dbReference type="GO" id="GO:0005654">
    <property type="term" value="C:nucleoplasm"/>
    <property type="evidence" value="ECO:0000318"/>
    <property type="project" value="GO_Central"/>
</dbReference>
<dbReference type="GO" id="GO:0003779">
    <property type="term" value="F:actin binding"/>
    <property type="evidence" value="ECO:0007669"/>
    <property type="project" value="UniProtKB-KW"/>
</dbReference>
<dbReference type="GO" id="GO:0070064">
    <property type="term" value="F:proline-rich region binding"/>
    <property type="evidence" value="ECO:0000250"/>
    <property type="project" value="UniProtKB"/>
</dbReference>
<dbReference type="GO" id="GO:0051764">
    <property type="term" value="P:actin crosslink formation"/>
    <property type="evidence" value="ECO:0000318"/>
    <property type="project" value="GO_Central"/>
</dbReference>
<dbReference type="GO" id="GO:0051017">
    <property type="term" value="P:actin filament bundle assembly"/>
    <property type="evidence" value="ECO:0000318"/>
    <property type="project" value="GO_Central"/>
</dbReference>
<dbReference type="GO" id="GO:0007009">
    <property type="term" value="P:plasma membrane organization"/>
    <property type="evidence" value="ECO:0007669"/>
    <property type="project" value="InterPro"/>
</dbReference>
<dbReference type="GO" id="GO:0030838">
    <property type="term" value="P:positive regulation of actin filament polymerization"/>
    <property type="evidence" value="ECO:0000250"/>
    <property type="project" value="UniProtKB"/>
</dbReference>
<dbReference type="GO" id="GO:0032956">
    <property type="term" value="P:regulation of actin cytoskeleton organization"/>
    <property type="evidence" value="ECO:0000250"/>
    <property type="project" value="UniProtKB"/>
</dbReference>
<dbReference type="CDD" id="cd07645">
    <property type="entry name" value="I-BAR_IMD_BAIAP2L1"/>
    <property type="match status" value="1"/>
</dbReference>
<dbReference type="CDD" id="cd11913">
    <property type="entry name" value="SH3_BAIAP2L1"/>
    <property type="match status" value="1"/>
</dbReference>
<dbReference type="FunFam" id="2.30.30.40:FF:000018">
    <property type="entry name" value="Brain-specific angiogenesis inhibitor 1-associated protein 2"/>
    <property type="match status" value="1"/>
</dbReference>
<dbReference type="FunFam" id="1.20.1270.60:FF:000043">
    <property type="entry name" value="Brain-specific angiogenesis inhibitor 1-associated protein 2-like 1"/>
    <property type="match status" value="1"/>
</dbReference>
<dbReference type="Gene3D" id="1.20.1270.60">
    <property type="entry name" value="Arfaptin homology (AH) domain/BAR domain"/>
    <property type="match status" value="1"/>
</dbReference>
<dbReference type="Gene3D" id="2.30.30.40">
    <property type="entry name" value="SH3 Domains"/>
    <property type="match status" value="1"/>
</dbReference>
<dbReference type="InterPro" id="IPR027267">
    <property type="entry name" value="AH/BAR_dom_sf"/>
</dbReference>
<dbReference type="InterPro" id="IPR030060">
    <property type="entry name" value="Baiap2l1_I-BAR_dom"/>
</dbReference>
<dbReference type="InterPro" id="IPR013606">
    <property type="entry name" value="I-BAR_dom"/>
</dbReference>
<dbReference type="InterPro" id="IPR027681">
    <property type="entry name" value="IRSp53/IRTKS/Pinkbar"/>
</dbReference>
<dbReference type="InterPro" id="IPR035592">
    <property type="entry name" value="IRTKS_SH3"/>
</dbReference>
<dbReference type="InterPro" id="IPR036028">
    <property type="entry name" value="SH3-like_dom_sf"/>
</dbReference>
<dbReference type="InterPro" id="IPR001452">
    <property type="entry name" value="SH3_domain"/>
</dbReference>
<dbReference type="PANTHER" id="PTHR14206">
    <property type="entry name" value="BRAIN-SPECIFIC ANGIOGENESIS INHIBITOR 1-ASSOCIATED PROTEIN 2"/>
    <property type="match status" value="1"/>
</dbReference>
<dbReference type="PANTHER" id="PTHR14206:SF4">
    <property type="entry name" value="BRAIN-SPECIFIC ANGIOGENESIS INHIBITOR 1-ASSOCIATED PROTEIN 2-LIKE PROTEIN 1"/>
    <property type="match status" value="1"/>
</dbReference>
<dbReference type="Pfam" id="PF08397">
    <property type="entry name" value="IMD"/>
    <property type="match status" value="1"/>
</dbReference>
<dbReference type="Pfam" id="PF14604">
    <property type="entry name" value="SH3_9"/>
    <property type="match status" value="1"/>
</dbReference>
<dbReference type="SMART" id="SM00326">
    <property type="entry name" value="SH3"/>
    <property type="match status" value="1"/>
</dbReference>
<dbReference type="SUPFAM" id="SSF103657">
    <property type="entry name" value="BAR/IMD domain-like"/>
    <property type="match status" value="1"/>
</dbReference>
<dbReference type="SUPFAM" id="SSF50044">
    <property type="entry name" value="SH3-domain"/>
    <property type="match status" value="1"/>
</dbReference>
<dbReference type="PROSITE" id="PS51338">
    <property type="entry name" value="IMD"/>
    <property type="match status" value="1"/>
</dbReference>
<dbReference type="PROSITE" id="PS50002">
    <property type="entry name" value="SH3"/>
    <property type="match status" value="1"/>
</dbReference>
<gene>
    <name type="primary">Baiap2l1</name>
</gene>